<evidence type="ECO:0000255" key="1">
    <source>
        <dbReference type="HAMAP-Rule" id="MF_01338"/>
    </source>
</evidence>
<evidence type="ECO:0000305" key="2"/>
<proteinExistence type="inferred from homology"/>
<accession>A7M906</accession>
<protein>
    <recommendedName>
        <fullName evidence="1">Ribulose bisphosphate carboxylase large chain</fullName>
        <shortName evidence="1">RuBisCO large subunit</shortName>
        <ecNumber evidence="1">4.1.1.39</ecNumber>
    </recommendedName>
</protein>
<reference key="1">
    <citation type="journal article" date="2007" name="BMC Plant Biol.">
        <title>Complete DNA sequences of the plastid genomes of two parasitic flowering plant species, Cuscuta reflexa and Cuscuta gronovii.</title>
        <authorList>
            <person name="Funk H.T."/>
            <person name="Berg S."/>
            <person name="Krupinska K."/>
            <person name="Maier U.-G."/>
            <person name="Krause K."/>
        </authorList>
    </citation>
    <scope>NUCLEOTIDE SEQUENCE [LARGE SCALE GENOMIC DNA]</scope>
</reference>
<dbReference type="EC" id="4.1.1.39" evidence="1"/>
<dbReference type="EMBL" id="AM711639">
    <property type="protein sequence ID" value="CAM98334.1"/>
    <property type="molecule type" value="Genomic_DNA"/>
</dbReference>
<dbReference type="RefSeq" id="YP_001430048.1">
    <property type="nucleotide sequence ID" value="NC_009765.1"/>
</dbReference>
<dbReference type="SMR" id="A7M906"/>
<dbReference type="GeneID" id="5536795"/>
<dbReference type="GO" id="GO:0009536">
    <property type="term" value="C:plastid"/>
    <property type="evidence" value="ECO:0007669"/>
    <property type="project" value="UniProtKB-SubCell"/>
</dbReference>
<dbReference type="GO" id="GO:0000287">
    <property type="term" value="F:magnesium ion binding"/>
    <property type="evidence" value="ECO:0007669"/>
    <property type="project" value="UniProtKB-UniRule"/>
</dbReference>
<dbReference type="GO" id="GO:0004497">
    <property type="term" value="F:monooxygenase activity"/>
    <property type="evidence" value="ECO:0007669"/>
    <property type="project" value="UniProtKB-KW"/>
</dbReference>
<dbReference type="GO" id="GO:0016984">
    <property type="term" value="F:ribulose-bisphosphate carboxylase activity"/>
    <property type="evidence" value="ECO:0007669"/>
    <property type="project" value="UniProtKB-UniRule"/>
</dbReference>
<dbReference type="GO" id="GO:0009853">
    <property type="term" value="P:photorespiration"/>
    <property type="evidence" value="ECO:0007669"/>
    <property type="project" value="UniProtKB-KW"/>
</dbReference>
<dbReference type="GO" id="GO:0019253">
    <property type="term" value="P:reductive pentose-phosphate cycle"/>
    <property type="evidence" value="ECO:0007669"/>
    <property type="project" value="UniProtKB-UniRule"/>
</dbReference>
<dbReference type="CDD" id="cd08212">
    <property type="entry name" value="RuBisCO_large_I"/>
    <property type="match status" value="1"/>
</dbReference>
<dbReference type="FunFam" id="3.20.20.110:FF:000001">
    <property type="entry name" value="Ribulose bisphosphate carboxylase large chain"/>
    <property type="match status" value="1"/>
</dbReference>
<dbReference type="FunFam" id="3.30.70.150:FF:000001">
    <property type="entry name" value="Ribulose bisphosphate carboxylase large chain"/>
    <property type="match status" value="1"/>
</dbReference>
<dbReference type="Gene3D" id="3.20.20.110">
    <property type="entry name" value="Ribulose bisphosphate carboxylase, large subunit, C-terminal domain"/>
    <property type="match status" value="1"/>
</dbReference>
<dbReference type="Gene3D" id="3.30.70.150">
    <property type="entry name" value="RuBisCO large subunit, N-terminal domain"/>
    <property type="match status" value="1"/>
</dbReference>
<dbReference type="HAMAP" id="MF_01338">
    <property type="entry name" value="RuBisCO_L_type1"/>
    <property type="match status" value="1"/>
</dbReference>
<dbReference type="InterPro" id="IPR033966">
    <property type="entry name" value="RuBisCO"/>
</dbReference>
<dbReference type="InterPro" id="IPR020878">
    <property type="entry name" value="RuBisCo_large_chain_AS"/>
</dbReference>
<dbReference type="InterPro" id="IPR000685">
    <property type="entry name" value="RuBisCO_lsu_C"/>
</dbReference>
<dbReference type="InterPro" id="IPR036376">
    <property type="entry name" value="RuBisCO_lsu_C_sf"/>
</dbReference>
<dbReference type="InterPro" id="IPR017443">
    <property type="entry name" value="RuBisCO_lsu_fd_N"/>
</dbReference>
<dbReference type="InterPro" id="IPR036422">
    <property type="entry name" value="RuBisCO_lsu_N_sf"/>
</dbReference>
<dbReference type="InterPro" id="IPR020888">
    <property type="entry name" value="RuBisCO_lsuI"/>
</dbReference>
<dbReference type="NCBIfam" id="NF003252">
    <property type="entry name" value="PRK04208.1"/>
    <property type="match status" value="1"/>
</dbReference>
<dbReference type="PANTHER" id="PTHR42704">
    <property type="entry name" value="RIBULOSE BISPHOSPHATE CARBOXYLASE"/>
    <property type="match status" value="1"/>
</dbReference>
<dbReference type="PANTHER" id="PTHR42704:SF16">
    <property type="entry name" value="RIBULOSE BISPHOSPHATE CARBOXYLASE LARGE CHAIN"/>
    <property type="match status" value="1"/>
</dbReference>
<dbReference type="Pfam" id="PF00016">
    <property type="entry name" value="RuBisCO_large"/>
    <property type="match status" value="1"/>
</dbReference>
<dbReference type="Pfam" id="PF02788">
    <property type="entry name" value="RuBisCO_large_N"/>
    <property type="match status" value="1"/>
</dbReference>
<dbReference type="SFLD" id="SFLDG01052">
    <property type="entry name" value="RuBisCO"/>
    <property type="match status" value="1"/>
</dbReference>
<dbReference type="SFLD" id="SFLDS00014">
    <property type="entry name" value="RuBisCO"/>
    <property type="match status" value="1"/>
</dbReference>
<dbReference type="SFLD" id="SFLDG00301">
    <property type="entry name" value="RuBisCO-like_proteins"/>
    <property type="match status" value="1"/>
</dbReference>
<dbReference type="SUPFAM" id="SSF51649">
    <property type="entry name" value="RuBisCo, C-terminal domain"/>
    <property type="match status" value="1"/>
</dbReference>
<dbReference type="SUPFAM" id="SSF54966">
    <property type="entry name" value="RuBisCO, large subunit, small (N-terminal) domain"/>
    <property type="match status" value="1"/>
</dbReference>
<dbReference type="PROSITE" id="PS00157">
    <property type="entry name" value="RUBISCO_LARGE"/>
    <property type="match status" value="1"/>
</dbReference>
<organism>
    <name type="scientific">Cuscuta gronovii</name>
    <name type="common">Common dodder</name>
    <name type="synonym">Epithymum gronovii</name>
    <dbReference type="NCBI Taxonomy" id="35886"/>
    <lineage>
        <taxon>Eukaryota</taxon>
        <taxon>Viridiplantae</taxon>
        <taxon>Streptophyta</taxon>
        <taxon>Embryophyta</taxon>
        <taxon>Tracheophyta</taxon>
        <taxon>Spermatophyta</taxon>
        <taxon>Magnoliopsida</taxon>
        <taxon>eudicotyledons</taxon>
        <taxon>Gunneridae</taxon>
        <taxon>Pentapetalae</taxon>
        <taxon>asterids</taxon>
        <taxon>lamiids</taxon>
        <taxon>Solanales</taxon>
        <taxon>Convolvulaceae</taxon>
        <taxon>Cuscuteae</taxon>
        <taxon>Cuscuta</taxon>
        <taxon>Cuscuta subgen. Grammica</taxon>
        <taxon>Cuscuta sect. Oxycarpae</taxon>
    </lineage>
</organism>
<comment type="function">
    <text evidence="1">RuBisCO catalyzes two reactions: the carboxylation of D-ribulose 1,5-bisphosphate, the primary event in carbon dioxide fixation, as well as the oxidative fragmentation of the pentose substrate in the photorespiration process. Both reactions occur simultaneously and in competition at the same active site.</text>
</comment>
<comment type="catalytic activity">
    <reaction evidence="1">
        <text>2 (2R)-3-phosphoglycerate + 2 H(+) = D-ribulose 1,5-bisphosphate + CO2 + H2O</text>
        <dbReference type="Rhea" id="RHEA:23124"/>
        <dbReference type="ChEBI" id="CHEBI:15377"/>
        <dbReference type="ChEBI" id="CHEBI:15378"/>
        <dbReference type="ChEBI" id="CHEBI:16526"/>
        <dbReference type="ChEBI" id="CHEBI:57870"/>
        <dbReference type="ChEBI" id="CHEBI:58272"/>
        <dbReference type="EC" id="4.1.1.39"/>
    </reaction>
</comment>
<comment type="catalytic activity">
    <reaction evidence="1">
        <text>D-ribulose 1,5-bisphosphate + O2 = 2-phosphoglycolate + (2R)-3-phosphoglycerate + 2 H(+)</text>
        <dbReference type="Rhea" id="RHEA:36631"/>
        <dbReference type="ChEBI" id="CHEBI:15378"/>
        <dbReference type="ChEBI" id="CHEBI:15379"/>
        <dbReference type="ChEBI" id="CHEBI:57870"/>
        <dbReference type="ChEBI" id="CHEBI:58033"/>
        <dbReference type="ChEBI" id="CHEBI:58272"/>
    </reaction>
</comment>
<comment type="cofactor">
    <cofactor evidence="1">
        <name>Mg(2+)</name>
        <dbReference type="ChEBI" id="CHEBI:18420"/>
    </cofactor>
    <text evidence="1">Binds 1 Mg(2+) ion per subunit.</text>
</comment>
<comment type="subunit">
    <text evidence="1">Heterohexadecamer of 8 large chains and 8 small chains; disulfide-linked. The disulfide link is formed within the large subunit homodimers.</text>
</comment>
<comment type="subcellular location">
    <subcellularLocation>
        <location>Plastid</location>
    </subcellularLocation>
</comment>
<comment type="PTM">
    <text evidence="1">The disulfide bond which can form in the large chain dimeric partners within the hexadecamer appears to be associated with oxidative stress and protein turnover.</text>
</comment>
<comment type="miscellaneous">
    <text evidence="1">The basic functional RuBisCO is composed of a large chain homodimer in a 'head-to-tail' conformation. In form I RuBisCO this homodimer is arranged in a barrel-like tetramer with the small subunits forming a tetrameric 'cap' on each end of the 'barrel'.</text>
</comment>
<comment type="similarity">
    <text evidence="1">Belongs to the RuBisCO large chain family. Type I subfamily.</text>
</comment>
<comment type="caution">
    <text evidence="2">Young tissue from this organism is photosynthetic and contains some thylakoids, although the photosynthetic activity does not exceed the light compensation point.</text>
</comment>
<keyword id="KW-0007">Acetylation</keyword>
<keyword id="KW-0113">Calvin cycle</keyword>
<keyword id="KW-0120">Carbon dioxide fixation</keyword>
<keyword id="KW-1015">Disulfide bond</keyword>
<keyword id="KW-0456">Lyase</keyword>
<keyword id="KW-0460">Magnesium</keyword>
<keyword id="KW-0479">Metal-binding</keyword>
<keyword id="KW-0488">Methylation</keyword>
<keyword id="KW-0503">Monooxygenase</keyword>
<keyword id="KW-0560">Oxidoreductase</keyword>
<keyword id="KW-0601">Photorespiration</keyword>
<keyword id="KW-0602">Photosynthesis</keyword>
<keyword id="KW-0934">Plastid</keyword>
<geneLocation type="plastid"/>
<name>RBL_CUSGR</name>
<gene>
    <name evidence="1" type="primary">rbcL</name>
</gene>
<feature type="propeptide" id="PRO_0000355766" evidence="1">
    <location>
        <begin position="1"/>
        <end position="2"/>
    </location>
</feature>
<feature type="chain" id="PRO_0000355767" description="Ribulose bisphosphate carboxylase large chain">
    <location>
        <begin position="3"/>
        <end position="481"/>
    </location>
</feature>
<feature type="active site" description="Proton acceptor" evidence="1">
    <location>
        <position position="175"/>
    </location>
</feature>
<feature type="active site" description="Proton acceptor" evidence="1">
    <location>
        <position position="294"/>
    </location>
</feature>
<feature type="binding site" description="in homodimeric partner" evidence="1">
    <location>
        <position position="123"/>
    </location>
    <ligand>
        <name>substrate</name>
    </ligand>
</feature>
<feature type="binding site" evidence="1">
    <location>
        <position position="173"/>
    </location>
    <ligand>
        <name>substrate</name>
    </ligand>
</feature>
<feature type="binding site" evidence="1">
    <location>
        <position position="177"/>
    </location>
    <ligand>
        <name>substrate</name>
    </ligand>
</feature>
<feature type="binding site" description="via carbamate group" evidence="1">
    <location>
        <position position="201"/>
    </location>
    <ligand>
        <name>Mg(2+)</name>
        <dbReference type="ChEBI" id="CHEBI:18420"/>
    </ligand>
</feature>
<feature type="binding site" evidence="1">
    <location>
        <position position="203"/>
    </location>
    <ligand>
        <name>Mg(2+)</name>
        <dbReference type="ChEBI" id="CHEBI:18420"/>
    </ligand>
</feature>
<feature type="binding site" evidence="1">
    <location>
        <position position="204"/>
    </location>
    <ligand>
        <name>Mg(2+)</name>
        <dbReference type="ChEBI" id="CHEBI:18420"/>
    </ligand>
</feature>
<feature type="binding site" evidence="1">
    <location>
        <position position="295"/>
    </location>
    <ligand>
        <name>substrate</name>
    </ligand>
</feature>
<feature type="binding site" evidence="1">
    <location>
        <position position="327"/>
    </location>
    <ligand>
        <name>substrate</name>
    </ligand>
</feature>
<feature type="binding site" evidence="1">
    <location>
        <position position="379"/>
    </location>
    <ligand>
        <name>substrate</name>
    </ligand>
</feature>
<feature type="site" description="Transition state stabilizer" evidence="1">
    <location>
        <position position="334"/>
    </location>
</feature>
<feature type="modified residue" description="N-acetylproline" evidence="1">
    <location>
        <position position="3"/>
    </location>
</feature>
<feature type="modified residue" description="N6,N6,N6-trimethyllysine" evidence="1">
    <location>
        <position position="14"/>
    </location>
</feature>
<feature type="modified residue" description="N6-carboxylysine" evidence="1">
    <location>
        <position position="201"/>
    </location>
</feature>
<feature type="disulfide bond" description="Interchain; in linked form" evidence="1">
    <location>
        <position position="247"/>
    </location>
</feature>
<sequence>MSPQTETKTSVGFKAGVKDYKLTYYTPDYETKPTDILAAFRVTPQPGVPPEEAGAAVAAESSTGTWTTVWTDGLTSLDRYKGRCYHIERVFGEKDQYIAYVAYPLDLFEEGSVTNMFTSIVGNVFGFKALRALRLEDLRIPPAYTKTFQGPPHGIQVERDKLNKYGRPLLGCTIKPKLGLSAKNYGRAVYECLRGGLDFTKDDENVNSQPFMRWRDRFLFCAEAIYKSQAETGEIKGHYLNATAGTCEEMLRRACFAKELGVPIIMHDYLTGGFTANTSLAHFCRENGLLLHIHRAMHAVIDRQKNHGIHFRVLAKALRLSGGDHIHAGTVVGKLEGEREITLGFVDLLRDNFVEKDRSRGIYFTQDWVSLPGVLPVASGGIHVWHMPALTDIFGDDSVLQFGGGTLGHPWGNAPGAVANRVALEACVQARNEGLNLAQDGNSIIRQASKWSPELAAACEVWKEIQFNFKSVDTLDLNEIK</sequence>